<comment type="function">
    <text evidence="1">Plays an essential role in the initiation and regulation of chromosomal replication. ATP-DnaA binds to the origin of replication (oriC) to initiate formation of the DNA replication initiation complex once per cell cycle. Binds the DnaA box (a 9 base pair repeat at the origin) and separates the double-stranded (ds)DNA. Forms a right-handed helical filament on oriC DNA; dsDNA binds to the exterior of the filament while single-stranded (ss)DNA is stabiized in the filament's interior. The ATP-DnaA-oriC complex binds and stabilizes one strand of the AT-rich DNA unwinding element (DUE), permitting loading of DNA polymerase. After initiation quickly degrades to an ADP-DnaA complex that is not apt for DNA replication. Binds acidic phospholipids.</text>
</comment>
<comment type="subunit">
    <text evidence="1">Oligomerizes as a right-handed, spiral filament on DNA at oriC.</text>
</comment>
<comment type="subcellular location">
    <subcellularLocation>
        <location evidence="1">Cytoplasm</location>
    </subcellularLocation>
</comment>
<comment type="domain">
    <text evidence="1">Domain I is involved in oligomerization and binding regulators, domain II is flexibile and of varying length in different bacteria, domain III forms the AAA+ region, while domain IV binds dsDNA.</text>
</comment>
<comment type="similarity">
    <text evidence="1">Belongs to the DnaA family.</text>
</comment>
<accession>B9DPX4</accession>
<dbReference type="EMBL" id="AM295250">
    <property type="protein sequence ID" value="CAL29377.1"/>
    <property type="molecule type" value="Genomic_DNA"/>
</dbReference>
<dbReference type="RefSeq" id="WP_015901712.1">
    <property type="nucleotide sequence ID" value="NC_012121.1"/>
</dbReference>
<dbReference type="SMR" id="B9DPX4"/>
<dbReference type="GeneID" id="93794916"/>
<dbReference type="KEGG" id="sca:SCA_2474"/>
<dbReference type="eggNOG" id="COG0593">
    <property type="taxonomic scope" value="Bacteria"/>
</dbReference>
<dbReference type="HOGENOM" id="CLU_026910_3_1_9"/>
<dbReference type="OrthoDB" id="9807019at2"/>
<dbReference type="BioCyc" id="SCAR396513:SCA_RS12430-MONOMER"/>
<dbReference type="Proteomes" id="UP000000444">
    <property type="component" value="Chromosome"/>
</dbReference>
<dbReference type="GO" id="GO:0005737">
    <property type="term" value="C:cytoplasm"/>
    <property type="evidence" value="ECO:0007669"/>
    <property type="project" value="UniProtKB-SubCell"/>
</dbReference>
<dbReference type="GO" id="GO:0005886">
    <property type="term" value="C:plasma membrane"/>
    <property type="evidence" value="ECO:0007669"/>
    <property type="project" value="TreeGrafter"/>
</dbReference>
<dbReference type="GO" id="GO:0005524">
    <property type="term" value="F:ATP binding"/>
    <property type="evidence" value="ECO:0007669"/>
    <property type="project" value="UniProtKB-UniRule"/>
</dbReference>
<dbReference type="GO" id="GO:0016887">
    <property type="term" value="F:ATP hydrolysis activity"/>
    <property type="evidence" value="ECO:0007669"/>
    <property type="project" value="InterPro"/>
</dbReference>
<dbReference type="GO" id="GO:0003688">
    <property type="term" value="F:DNA replication origin binding"/>
    <property type="evidence" value="ECO:0007669"/>
    <property type="project" value="UniProtKB-UniRule"/>
</dbReference>
<dbReference type="GO" id="GO:0008289">
    <property type="term" value="F:lipid binding"/>
    <property type="evidence" value="ECO:0007669"/>
    <property type="project" value="UniProtKB-KW"/>
</dbReference>
<dbReference type="GO" id="GO:0006270">
    <property type="term" value="P:DNA replication initiation"/>
    <property type="evidence" value="ECO:0007669"/>
    <property type="project" value="UniProtKB-UniRule"/>
</dbReference>
<dbReference type="GO" id="GO:0006275">
    <property type="term" value="P:regulation of DNA replication"/>
    <property type="evidence" value="ECO:0007669"/>
    <property type="project" value="UniProtKB-UniRule"/>
</dbReference>
<dbReference type="CDD" id="cd00009">
    <property type="entry name" value="AAA"/>
    <property type="match status" value="1"/>
</dbReference>
<dbReference type="CDD" id="cd06571">
    <property type="entry name" value="Bac_DnaA_C"/>
    <property type="match status" value="1"/>
</dbReference>
<dbReference type="FunFam" id="1.10.1750.10:FF:000003">
    <property type="entry name" value="Chromosomal replication initiator protein DnaA"/>
    <property type="match status" value="1"/>
</dbReference>
<dbReference type="FunFam" id="1.10.8.60:FF:000003">
    <property type="entry name" value="Chromosomal replication initiator protein DnaA"/>
    <property type="match status" value="1"/>
</dbReference>
<dbReference type="FunFam" id="3.40.50.300:FF:000150">
    <property type="entry name" value="Chromosomal replication initiator protein DnaA"/>
    <property type="match status" value="1"/>
</dbReference>
<dbReference type="Gene3D" id="1.10.1750.10">
    <property type="match status" value="1"/>
</dbReference>
<dbReference type="Gene3D" id="1.10.8.60">
    <property type="match status" value="1"/>
</dbReference>
<dbReference type="Gene3D" id="3.30.300.180">
    <property type="match status" value="1"/>
</dbReference>
<dbReference type="Gene3D" id="3.40.50.300">
    <property type="entry name" value="P-loop containing nucleotide triphosphate hydrolases"/>
    <property type="match status" value="1"/>
</dbReference>
<dbReference type="HAMAP" id="MF_00377">
    <property type="entry name" value="DnaA_bact"/>
    <property type="match status" value="1"/>
</dbReference>
<dbReference type="InterPro" id="IPR003593">
    <property type="entry name" value="AAA+_ATPase"/>
</dbReference>
<dbReference type="InterPro" id="IPR001957">
    <property type="entry name" value="Chromosome_initiator_DnaA"/>
</dbReference>
<dbReference type="InterPro" id="IPR020591">
    <property type="entry name" value="Chromosome_initiator_DnaA-like"/>
</dbReference>
<dbReference type="InterPro" id="IPR018312">
    <property type="entry name" value="Chromosome_initiator_DnaA_CS"/>
</dbReference>
<dbReference type="InterPro" id="IPR013159">
    <property type="entry name" value="DnaA_C"/>
</dbReference>
<dbReference type="InterPro" id="IPR013317">
    <property type="entry name" value="DnaA_dom"/>
</dbReference>
<dbReference type="InterPro" id="IPR024633">
    <property type="entry name" value="DnaA_N_dom"/>
</dbReference>
<dbReference type="InterPro" id="IPR038454">
    <property type="entry name" value="DnaA_N_sf"/>
</dbReference>
<dbReference type="InterPro" id="IPR027417">
    <property type="entry name" value="P-loop_NTPase"/>
</dbReference>
<dbReference type="InterPro" id="IPR010921">
    <property type="entry name" value="Trp_repressor/repl_initiator"/>
</dbReference>
<dbReference type="NCBIfam" id="TIGR00362">
    <property type="entry name" value="DnaA"/>
    <property type="match status" value="1"/>
</dbReference>
<dbReference type="PANTHER" id="PTHR30050">
    <property type="entry name" value="CHROMOSOMAL REPLICATION INITIATOR PROTEIN DNAA"/>
    <property type="match status" value="1"/>
</dbReference>
<dbReference type="PANTHER" id="PTHR30050:SF2">
    <property type="entry name" value="CHROMOSOMAL REPLICATION INITIATOR PROTEIN DNAA"/>
    <property type="match status" value="1"/>
</dbReference>
<dbReference type="Pfam" id="PF00308">
    <property type="entry name" value="Bac_DnaA"/>
    <property type="match status" value="1"/>
</dbReference>
<dbReference type="Pfam" id="PF08299">
    <property type="entry name" value="Bac_DnaA_C"/>
    <property type="match status" value="1"/>
</dbReference>
<dbReference type="Pfam" id="PF11638">
    <property type="entry name" value="DnaA_N"/>
    <property type="match status" value="1"/>
</dbReference>
<dbReference type="PRINTS" id="PR00051">
    <property type="entry name" value="DNAA"/>
</dbReference>
<dbReference type="SMART" id="SM00382">
    <property type="entry name" value="AAA"/>
    <property type="match status" value="1"/>
</dbReference>
<dbReference type="SMART" id="SM00760">
    <property type="entry name" value="Bac_DnaA_C"/>
    <property type="match status" value="1"/>
</dbReference>
<dbReference type="SUPFAM" id="SSF52540">
    <property type="entry name" value="P-loop containing nucleoside triphosphate hydrolases"/>
    <property type="match status" value="1"/>
</dbReference>
<dbReference type="SUPFAM" id="SSF48295">
    <property type="entry name" value="TrpR-like"/>
    <property type="match status" value="1"/>
</dbReference>
<dbReference type="PROSITE" id="PS01008">
    <property type="entry name" value="DNAA"/>
    <property type="match status" value="1"/>
</dbReference>
<proteinExistence type="inferred from homology"/>
<organism>
    <name type="scientific">Staphylococcus carnosus (strain TM300)</name>
    <dbReference type="NCBI Taxonomy" id="396513"/>
    <lineage>
        <taxon>Bacteria</taxon>
        <taxon>Bacillati</taxon>
        <taxon>Bacillota</taxon>
        <taxon>Bacilli</taxon>
        <taxon>Bacillales</taxon>
        <taxon>Staphylococcaceae</taxon>
        <taxon>Staphylococcus</taxon>
    </lineage>
</organism>
<gene>
    <name evidence="1" type="primary">dnaA</name>
    <name type="ordered locus">Sca_2474</name>
</gene>
<feature type="chain" id="PRO_1000189808" description="Chromosomal replication initiator protein DnaA">
    <location>
        <begin position="1"/>
        <end position="453"/>
    </location>
</feature>
<feature type="region of interest" description="Domain I, interacts with DnaA modulators" evidence="1">
    <location>
        <begin position="1"/>
        <end position="73"/>
    </location>
</feature>
<feature type="region of interest" description="Domain II" evidence="1">
    <location>
        <begin position="73"/>
        <end position="114"/>
    </location>
</feature>
<feature type="region of interest" description="Disordered" evidence="2">
    <location>
        <begin position="91"/>
        <end position="113"/>
    </location>
</feature>
<feature type="region of interest" description="Domain III, AAA+ region" evidence="1">
    <location>
        <begin position="115"/>
        <end position="331"/>
    </location>
</feature>
<feature type="region of interest" description="Domain IV, binds dsDNA" evidence="1">
    <location>
        <begin position="332"/>
        <end position="453"/>
    </location>
</feature>
<feature type="compositionally biased region" description="Basic and acidic residues" evidence="2">
    <location>
        <begin position="91"/>
        <end position="103"/>
    </location>
</feature>
<feature type="binding site" evidence="1">
    <location>
        <position position="159"/>
    </location>
    <ligand>
        <name>ATP</name>
        <dbReference type="ChEBI" id="CHEBI:30616"/>
    </ligand>
</feature>
<feature type="binding site" evidence="1">
    <location>
        <position position="161"/>
    </location>
    <ligand>
        <name>ATP</name>
        <dbReference type="ChEBI" id="CHEBI:30616"/>
    </ligand>
</feature>
<feature type="binding site" evidence="1">
    <location>
        <position position="162"/>
    </location>
    <ligand>
        <name>ATP</name>
        <dbReference type="ChEBI" id="CHEBI:30616"/>
    </ligand>
</feature>
<feature type="binding site" evidence="1">
    <location>
        <position position="163"/>
    </location>
    <ligand>
        <name>ATP</name>
        <dbReference type="ChEBI" id="CHEBI:30616"/>
    </ligand>
</feature>
<sequence length="453" mass="52188">MSKEEIWDKVLELAKNELTPISYSTWFEPPKTELIDIQENTAIILVESNFVQDFLKKQYTDIIADLIEKAIGTKLMPNFVIQEDLTEDKQVKDSAKAKSEAKPDVQAPQNSSEDQFNVHNTFETFVIGPGNRFPHAASLAVAEAPAKAYNPLFIYGGVGLGKTHLMHAIGHYVLENNRDAKVIYTSSEKFTNEFIKSIRDNETEQFREKYRNIDVLLIDDIQFIQNKEQTQEEFFHTFNDLHQTGKQIVISSDRPPKEIAKLEDRLRSRFEWGLIVDITPPDYETRMAILQKKLEEEDVDIPLESLTYIANQIQSNIRELEGALTRVIAYSRLQNEAITTELTAEALKDIIQTPKSKKITIQDIQKVVGQYYNVRLEDFAAKKRTKSIAYPRQIAMYLSRELTDFSLPKIGEEFGGRDHTTVIHAHMKIQTDMSEDPIFKQEVENLEKEIRNQ</sequence>
<reference key="1">
    <citation type="journal article" date="2009" name="Appl. Environ. Microbiol.">
        <title>Genome analysis of the meat starter culture bacterium Staphylococcus carnosus TM300.</title>
        <authorList>
            <person name="Rosenstein R."/>
            <person name="Nerz C."/>
            <person name="Biswas L."/>
            <person name="Resch A."/>
            <person name="Raddatz G."/>
            <person name="Schuster S.C."/>
            <person name="Goetz F."/>
        </authorList>
    </citation>
    <scope>NUCLEOTIDE SEQUENCE [LARGE SCALE GENOMIC DNA]</scope>
    <source>
        <strain>TM300</strain>
    </source>
</reference>
<protein>
    <recommendedName>
        <fullName evidence="1">Chromosomal replication initiator protein DnaA</fullName>
    </recommendedName>
</protein>
<name>DNAA_STACT</name>
<evidence type="ECO:0000255" key="1">
    <source>
        <dbReference type="HAMAP-Rule" id="MF_00377"/>
    </source>
</evidence>
<evidence type="ECO:0000256" key="2">
    <source>
        <dbReference type="SAM" id="MobiDB-lite"/>
    </source>
</evidence>
<keyword id="KW-0067">ATP-binding</keyword>
<keyword id="KW-0963">Cytoplasm</keyword>
<keyword id="KW-0235">DNA replication</keyword>
<keyword id="KW-0238">DNA-binding</keyword>
<keyword id="KW-0446">Lipid-binding</keyword>
<keyword id="KW-0547">Nucleotide-binding</keyword>
<keyword id="KW-1185">Reference proteome</keyword>